<reference key="1">
    <citation type="journal article" date="2011" name="PLoS Genet.">
        <title>The evolution of host specialization in the vertebrate gut symbiont Lactobacillus reuteri.</title>
        <authorList>
            <person name="Frese S.A."/>
            <person name="Benson A.K."/>
            <person name="Tannock G.W."/>
            <person name="Loach D.M."/>
            <person name="Kim J."/>
            <person name="Zhang M."/>
            <person name="Oh P.L."/>
            <person name="Heng N.C."/>
            <person name="Patil P.B."/>
            <person name="Juge N."/>
            <person name="Mackenzie D.A."/>
            <person name="Pearson B.M."/>
            <person name="Lapidus A."/>
            <person name="Dalin E."/>
            <person name="Tice H."/>
            <person name="Goltsman E."/>
            <person name="Land M."/>
            <person name="Hauser L."/>
            <person name="Ivanova N."/>
            <person name="Kyrpides N.C."/>
            <person name="Walter J."/>
        </authorList>
    </citation>
    <scope>NUCLEOTIDE SEQUENCE [LARGE SCALE GENOMIC DNA]</scope>
    <source>
        <strain>DSM 20016</strain>
    </source>
</reference>
<accession>A5VJG8</accession>
<feature type="chain" id="PRO_1000059848" description="Small ribosomal subunit protein bS21">
    <location>
        <begin position="1"/>
        <end position="63"/>
    </location>
</feature>
<feature type="region of interest" description="Disordered" evidence="2">
    <location>
        <begin position="40"/>
        <end position="63"/>
    </location>
</feature>
<feature type="compositionally biased region" description="Basic and acidic residues" evidence="2">
    <location>
        <begin position="40"/>
        <end position="52"/>
    </location>
</feature>
<feature type="compositionally biased region" description="Basic residues" evidence="2">
    <location>
        <begin position="53"/>
        <end position="63"/>
    </location>
</feature>
<name>RS21_LIMRD</name>
<comment type="similarity">
    <text evidence="1">Belongs to the bacterial ribosomal protein bS21 family.</text>
</comment>
<protein>
    <recommendedName>
        <fullName evidence="1">Small ribosomal subunit protein bS21</fullName>
    </recommendedName>
    <alternativeName>
        <fullName evidence="3">30S ribosomal protein S21</fullName>
    </alternativeName>
</protein>
<proteinExistence type="inferred from homology"/>
<gene>
    <name evidence="1" type="primary">rpsU</name>
    <name type="ordered locus">Lreu_0728</name>
</gene>
<dbReference type="EMBL" id="CP000705">
    <property type="protein sequence ID" value="ABQ82992.1"/>
    <property type="molecule type" value="Genomic_DNA"/>
</dbReference>
<dbReference type="RefSeq" id="WP_003665847.1">
    <property type="nucleotide sequence ID" value="NZ_AZDD01000029.1"/>
</dbReference>
<dbReference type="SMR" id="A5VJG8"/>
<dbReference type="STRING" id="557436.Lreu_0728"/>
<dbReference type="GeneID" id="78173499"/>
<dbReference type="KEGG" id="lre:Lreu_0728"/>
<dbReference type="PATRIC" id="fig|557436.17.peg.1015"/>
<dbReference type="eggNOG" id="COG0828">
    <property type="taxonomic scope" value="Bacteria"/>
</dbReference>
<dbReference type="HOGENOM" id="CLU_159258_3_2_9"/>
<dbReference type="Proteomes" id="UP000001991">
    <property type="component" value="Chromosome"/>
</dbReference>
<dbReference type="GO" id="GO:1990904">
    <property type="term" value="C:ribonucleoprotein complex"/>
    <property type="evidence" value="ECO:0007669"/>
    <property type="project" value="UniProtKB-KW"/>
</dbReference>
<dbReference type="GO" id="GO:0005840">
    <property type="term" value="C:ribosome"/>
    <property type="evidence" value="ECO:0007669"/>
    <property type="project" value="UniProtKB-KW"/>
</dbReference>
<dbReference type="GO" id="GO:0003735">
    <property type="term" value="F:structural constituent of ribosome"/>
    <property type="evidence" value="ECO:0007669"/>
    <property type="project" value="InterPro"/>
</dbReference>
<dbReference type="GO" id="GO:0006412">
    <property type="term" value="P:translation"/>
    <property type="evidence" value="ECO:0007669"/>
    <property type="project" value="UniProtKB-UniRule"/>
</dbReference>
<dbReference type="Gene3D" id="1.20.5.1150">
    <property type="entry name" value="Ribosomal protein S8"/>
    <property type="match status" value="1"/>
</dbReference>
<dbReference type="HAMAP" id="MF_00358">
    <property type="entry name" value="Ribosomal_bS21"/>
    <property type="match status" value="1"/>
</dbReference>
<dbReference type="InterPro" id="IPR001911">
    <property type="entry name" value="Ribosomal_bS21"/>
</dbReference>
<dbReference type="InterPro" id="IPR018278">
    <property type="entry name" value="Ribosomal_bS21_CS"/>
</dbReference>
<dbReference type="InterPro" id="IPR038380">
    <property type="entry name" value="Ribosomal_bS21_sf"/>
</dbReference>
<dbReference type="NCBIfam" id="TIGR00030">
    <property type="entry name" value="S21p"/>
    <property type="match status" value="1"/>
</dbReference>
<dbReference type="PANTHER" id="PTHR21109">
    <property type="entry name" value="MITOCHONDRIAL 28S RIBOSOMAL PROTEIN S21"/>
    <property type="match status" value="1"/>
</dbReference>
<dbReference type="PANTHER" id="PTHR21109:SF22">
    <property type="entry name" value="SMALL RIBOSOMAL SUBUNIT PROTEIN BS21"/>
    <property type="match status" value="1"/>
</dbReference>
<dbReference type="Pfam" id="PF01165">
    <property type="entry name" value="Ribosomal_S21"/>
    <property type="match status" value="1"/>
</dbReference>
<dbReference type="PRINTS" id="PR00976">
    <property type="entry name" value="RIBOSOMALS21"/>
</dbReference>
<dbReference type="PROSITE" id="PS01181">
    <property type="entry name" value="RIBOSOMAL_S21"/>
    <property type="match status" value="1"/>
</dbReference>
<evidence type="ECO:0000255" key="1">
    <source>
        <dbReference type="HAMAP-Rule" id="MF_00358"/>
    </source>
</evidence>
<evidence type="ECO:0000256" key="2">
    <source>
        <dbReference type="SAM" id="MobiDB-lite"/>
    </source>
</evidence>
<evidence type="ECO:0000305" key="3"/>
<organism>
    <name type="scientific">Limosilactobacillus reuteri (strain DSM 20016)</name>
    <name type="common">Lactobacillus reuteri</name>
    <dbReference type="NCBI Taxonomy" id="557436"/>
    <lineage>
        <taxon>Bacteria</taxon>
        <taxon>Bacillati</taxon>
        <taxon>Bacillota</taxon>
        <taxon>Bacilli</taxon>
        <taxon>Lactobacillales</taxon>
        <taxon>Lactobacillaceae</taxon>
        <taxon>Limosilactobacillus</taxon>
    </lineage>
</organism>
<sequence>MSKTVVRKNESLDDALRRFKRSVSRNGTLQEYRKREFYEKPSVKRKLKSEAARKRKNKRGRRY</sequence>
<keyword id="KW-1185">Reference proteome</keyword>
<keyword id="KW-0687">Ribonucleoprotein</keyword>
<keyword id="KW-0689">Ribosomal protein</keyword>